<organism>
    <name type="scientific">Hamiltonella defensa subsp. Acyrthosiphon pisum (strain 5AT)</name>
    <dbReference type="NCBI Taxonomy" id="572265"/>
    <lineage>
        <taxon>Bacteria</taxon>
        <taxon>Pseudomonadati</taxon>
        <taxon>Pseudomonadota</taxon>
        <taxon>Gammaproteobacteria</taxon>
        <taxon>Enterobacterales</taxon>
        <taxon>Enterobacteriaceae</taxon>
        <taxon>aphid secondary symbionts</taxon>
        <taxon>Candidatus Hamiltonella</taxon>
    </lineage>
</organism>
<gene>
    <name evidence="1" type="primary">ribB</name>
    <name type="ordered locus">HDEF_0105</name>
</gene>
<protein>
    <recommendedName>
        <fullName evidence="1">3,4-dihydroxy-2-butanone 4-phosphate synthase</fullName>
        <shortName evidence="1">DHBP synthase</shortName>
        <ecNumber evidence="1">4.1.99.12</ecNumber>
    </recommendedName>
</protein>
<dbReference type="EC" id="4.1.99.12" evidence="1"/>
<dbReference type="EMBL" id="CP001277">
    <property type="protein sequence ID" value="ACQ66879.1"/>
    <property type="molecule type" value="Genomic_DNA"/>
</dbReference>
<dbReference type="RefSeq" id="WP_012737844.1">
    <property type="nucleotide sequence ID" value="NC_012751.1"/>
</dbReference>
<dbReference type="SMR" id="C4K8P2"/>
<dbReference type="STRING" id="572265.HDEF_0105"/>
<dbReference type="GeneID" id="66260044"/>
<dbReference type="KEGG" id="hde:HDEF_0105"/>
<dbReference type="eggNOG" id="COG0108">
    <property type="taxonomic scope" value="Bacteria"/>
</dbReference>
<dbReference type="HOGENOM" id="CLU_020273_3_0_6"/>
<dbReference type="UniPathway" id="UPA00275">
    <property type="reaction ID" value="UER00399"/>
</dbReference>
<dbReference type="Proteomes" id="UP000002334">
    <property type="component" value="Chromosome"/>
</dbReference>
<dbReference type="GO" id="GO:0005829">
    <property type="term" value="C:cytosol"/>
    <property type="evidence" value="ECO:0007669"/>
    <property type="project" value="TreeGrafter"/>
</dbReference>
<dbReference type="GO" id="GO:0008686">
    <property type="term" value="F:3,4-dihydroxy-2-butanone-4-phosphate synthase activity"/>
    <property type="evidence" value="ECO:0007669"/>
    <property type="project" value="UniProtKB-UniRule"/>
</dbReference>
<dbReference type="GO" id="GO:0000287">
    <property type="term" value="F:magnesium ion binding"/>
    <property type="evidence" value="ECO:0007669"/>
    <property type="project" value="UniProtKB-UniRule"/>
</dbReference>
<dbReference type="GO" id="GO:0030145">
    <property type="term" value="F:manganese ion binding"/>
    <property type="evidence" value="ECO:0007669"/>
    <property type="project" value="UniProtKB-UniRule"/>
</dbReference>
<dbReference type="GO" id="GO:0009231">
    <property type="term" value="P:riboflavin biosynthetic process"/>
    <property type="evidence" value="ECO:0007669"/>
    <property type="project" value="UniProtKB-UniRule"/>
</dbReference>
<dbReference type="FunFam" id="3.90.870.10:FF:000002">
    <property type="entry name" value="3,4-dihydroxy-2-butanone 4-phosphate synthase"/>
    <property type="match status" value="1"/>
</dbReference>
<dbReference type="Gene3D" id="3.90.870.10">
    <property type="entry name" value="DHBP synthase"/>
    <property type="match status" value="1"/>
</dbReference>
<dbReference type="HAMAP" id="MF_00180">
    <property type="entry name" value="RibB"/>
    <property type="match status" value="1"/>
</dbReference>
<dbReference type="InterPro" id="IPR017945">
    <property type="entry name" value="DHBP_synth_RibB-like_a/b_dom"/>
</dbReference>
<dbReference type="InterPro" id="IPR000422">
    <property type="entry name" value="DHBP_synthase_RibB"/>
</dbReference>
<dbReference type="NCBIfam" id="TIGR00506">
    <property type="entry name" value="ribB"/>
    <property type="match status" value="1"/>
</dbReference>
<dbReference type="PANTHER" id="PTHR21327:SF38">
    <property type="entry name" value="3,4-DIHYDROXY-2-BUTANONE 4-PHOSPHATE SYNTHASE"/>
    <property type="match status" value="1"/>
</dbReference>
<dbReference type="PANTHER" id="PTHR21327">
    <property type="entry name" value="GTP CYCLOHYDROLASE II-RELATED"/>
    <property type="match status" value="1"/>
</dbReference>
<dbReference type="Pfam" id="PF00926">
    <property type="entry name" value="DHBP_synthase"/>
    <property type="match status" value="1"/>
</dbReference>
<dbReference type="SUPFAM" id="SSF55821">
    <property type="entry name" value="YrdC/RibB"/>
    <property type="match status" value="1"/>
</dbReference>
<evidence type="ECO:0000255" key="1">
    <source>
        <dbReference type="HAMAP-Rule" id="MF_00180"/>
    </source>
</evidence>
<accession>C4K8P2</accession>
<name>RIBB_HAMD5</name>
<reference key="1">
    <citation type="journal article" date="2009" name="Proc. Natl. Acad. Sci. U.S.A.">
        <title>Hamiltonella defensa, genome evolution of protective bacterial endosymbiont from pathogenic ancestors.</title>
        <authorList>
            <person name="Degnan P.H."/>
            <person name="Yu Y."/>
            <person name="Sisneros N."/>
            <person name="Wing R.A."/>
            <person name="Moran N.A."/>
        </authorList>
    </citation>
    <scope>NUCLEOTIDE SEQUENCE [LARGE SCALE GENOMIC DNA]</scope>
    <source>
        <strain>5AT</strain>
    </source>
</reference>
<proteinExistence type="inferred from homology"/>
<sequence length="218" mass="23767">MNQICLEYFGNSVARVKKALENLKNGHGVMVLDDENRENEGDFVFAAETMTVEQMALTIRHGSGIVCLCLTEERCQQLELPMMVEKNSSTFQTPFTVSIEAAKGVTTGVSASDRITTIKAAISQTAKPADLHRPGHVFPLKGHPKGVLGRSGHTEAAIDLARLAGLKPAGVLCELTNDNGTMARAPEVIAFAKKHKMTVLSIEDLIEYRQTHMETNFS</sequence>
<keyword id="KW-0456">Lyase</keyword>
<keyword id="KW-0460">Magnesium</keyword>
<keyword id="KW-0464">Manganese</keyword>
<keyword id="KW-0479">Metal-binding</keyword>
<keyword id="KW-0686">Riboflavin biosynthesis</keyword>
<comment type="function">
    <text evidence="1">Catalyzes the conversion of D-ribulose 5-phosphate to formate and 3,4-dihydroxy-2-butanone 4-phosphate.</text>
</comment>
<comment type="catalytic activity">
    <reaction evidence="1">
        <text>D-ribulose 5-phosphate = (2S)-2-hydroxy-3-oxobutyl phosphate + formate + H(+)</text>
        <dbReference type="Rhea" id="RHEA:18457"/>
        <dbReference type="ChEBI" id="CHEBI:15378"/>
        <dbReference type="ChEBI" id="CHEBI:15740"/>
        <dbReference type="ChEBI" id="CHEBI:58121"/>
        <dbReference type="ChEBI" id="CHEBI:58830"/>
        <dbReference type="EC" id="4.1.99.12"/>
    </reaction>
</comment>
<comment type="cofactor">
    <cofactor evidence="1">
        <name>Mg(2+)</name>
        <dbReference type="ChEBI" id="CHEBI:18420"/>
    </cofactor>
    <cofactor evidence="1">
        <name>Mn(2+)</name>
        <dbReference type="ChEBI" id="CHEBI:29035"/>
    </cofactor>
    <text evidence="1">Binds 2 divalent metal cations per subunit. Magnesium or manganese.</text>
</comment>
<comment type="pathway">
    <text evidence="1">Cofactor biosynthesis; riboflavin biosynthesis; 2-hydroxy-3-oxobutyl phosphate from D-ribulose 5-phosphate: step 1/1.</text>
</comment>
<comment type="subunit">
    <text evidence="1">Homodimer.</text>
</comment>
<comment type="similarity">
    <text evidence="1">Belongs to the DHBP synthase family.</text>
</comment>
<feature type="chain" id="PRO_1000203821" description="3,4-dihydroxy-2-butanone 4-phosphate synthase">
    <location>
        <begin position="1"/>
        <end position="218"/>
    </location>
</feature>
<feature type="binding site" evidence="1">
    <location>
        <begin position="37"/>
        <end position="38"/>
    </location>
    <ligand>
        <name>D-ribulose 5-phosphate</name>
        <dbReference type="ChEBI" id="CHEBI:58121"/>
    </ligand>
</feature>
<feature type="binding site" evidence="1">
    <location>
        <position position="38"/>
    </location>
    <ligand>
        <name>Mg(2+)</name>
        <dbReference type="ChEBI" id="CHEBI:18420"/>
        <label>1</label>
    </ligand>
</feature>
<feature type="binding site" evidence="1">
    <location>
        <position position="38"/>
    </location>
    <ligand>
        <name>Mg(2+)</name>
        <dbReference type="ChEBI" id="CHEBI:18420"/>
        <label>2</label>
    </ligand>
</feature>
<feature type="binding site" evidence="1">
    <location>
        <position position="42"/>
    </location>
    <ligand>
        <name>D-ribulose 5-phosphate</name>
        <dbReference type="ChEBI" id="CHEBI:58121"/>
    </ligand>
</feature>
<feature type="binding site" evidence="1">
    <location>
        <begin position="150"/>
        <end position="154"/>
    </location>
    <ligand>
        <name>D-ribulose 5-phosphate</name>
        <dbReference type="ChEBI" id="CHEBI:58121"/>
    </ligand>
</feature>
<feature type="binding site" evidence="1">
    <location>
        <position position="153"/>
    </location>
    <ligand>
        <name>Mg(2+)</name>
        <dbReference type="ChEBI" id="CHEBI:18420"/>
        <label>2</label>
    </ligand>
</feature>
<feature type="binding site" evidence="1">
    <location>
        <position position="174"/>
    </location>
    <ligand>
        <name>D-ribulose 5-phosphate</name>
        <dbReference type="ChEBI" id="CHEBI:58121"/>
    </ligand>
</feature>
<feature type="site" description="Essential for catalytic activity" evidence="1">
    <location>
        <position position="136"/>
    </location>
</feature>
<feature type="site" description="Essential for catalytic activity" evidence="1">
    <location>
        <position position="174"/>
    </location>
</feature>